<organism>
    <name type="scientific">Acidianus two-tailed virus</name>
    <name type="common">ATV</name>
    <dbReference type="NCBI Taxonomy" id="315953"/>
    <lineage>
        <taxon>Viruses</taxon>
        <taxon>Viruses incertae sedis</taxon>
        <taxon>Bicaudaviridae</taxon>
        <taxon>Bicaudavirus</taxon>
    </lineage>
</organism>
<keyword id="KW-0004">4Fe-4S</keyword>
<keyword id="KW-0408">Iron</keyword>
<keyword id="KW-0411">Iron-sulfur</keyword>
<keyword id="KW-0479">Metal-binding</keyword>
<keyword id="KW-1185">Reference proteome</keyword>
<keyword id="KW-0949">S-adenosyl-L-methionine</keyword>
<protein>
    <recommendedName>
        <fullName>Uncharacterized protein ORF301</fullName>
    </recommendedName>
</protein>
<sequence length="301" mass="34897">MAHFTLDTFTFNKDVRKVSFGEYNIRPPLIKPSKLTYVENGGVGKELSDGWALNFAIGCIHACPFCYVDNIHKRFTFARVGDVVQRPWGMYFLKPRNIDEAIKKTPWKRWKGKLVMMSSTHDPYLPQLYPTSRKILEKALPAGVKFLIQTRSVLVTKDLDLLSEYKDQVILQVSIATLEEKFASIIEPRAPPPKARLEVLRKAKEVGLKVGVIVAPIFPPNKVREDVKEDLEMIMKELADIGVDQVFGEMLHERGMNMEYIESLLWEKVKIDKELDEELGKMFTELLNKYHLRGKWWYEKH</sequence>
<reference key="1">
    <citation type="journal article" date="2005" name="Nature">
        <title>Virology: independent virus development outside a host.</title>
        <authorList>
            <person name="Haring M."/>
            <person name="Vestergaard G."/>
            <person name="Rachel R."/>
            <person name="Chen L."/>
            <person name="Garrett R.A."/>
            <person name="Prangishvili D."/>
        </authorList>
    </citation>
    <scope>NUCLEOTIDE SEQUENCE [GENOMIC DNA]</scope>
</reference>
<feature type="chain" id="PRO_0000389035" description="Uncharacterized protein ORF301">
    <location>
        <begin position="1"/>
        <end position="301"/>
    </location>
</feature>
<feature type="domain" description="Radical SAM core" evidence="1">
    <location>
        <begin position="45"/>
        <end position="286"/>
    </location>
</feature>
<organismHost>
    <name type="scientific">Acidianus convivator</name>
    <dbReference type="NCBI Taxonomy" id="269667"/>
</organismHost>
<proteinExistence type="predicted"/>
<evidence type="ECO:0000255" key="1">
    <source>
        <dbReference type="PROSITE-ProRule" id="PRU01266"/>
    </source>
</evidence>
<accession>Q3V4R6</accession>
<name>Y301_ATV</name>
<dbReference type="EMBL" id="AJ888457">
    <property type="protein sequence ID" value="CAI59898.1"/>
    <property type="molecule type" value="Genomic_DNA"/>
</dbReference>
<dbReference type="RefSeq" id="YP_319875.1">
    <property type="nucleotide sequence ID" value="NC_007409.1"/>
</dbReference>
<dbReference type="SMR" id="Q3V4R6"/>
<dbReference type="GeneID" id="4484254"/>
<dbReference type="KEGG" id="vg:4484254"/>
<dbReference type="Proteomes" id="UP000002150">
    <property type="component" value="Genome"/>
</dbReference>
<dbReference type="GO" id="GO:0051539">
    <property type="term" value="F:4 iron, 4 sulfur cluster binding"/>
    <property type="evidence" value="ECO:0007669"/>
    <property type="project" value="UniProtKB-KW"/>
</dbReference>
<dbReference type="GO" id="GO:0003824">
    <property type="term" value="F:catalytic activity"/>
    <property type="evidence" value="ECO:0007669"/>
    <property type="project" value="InterPro"/>
</dbReference>
<dbReference type="GO" id="GO:0046872">
    <property type="term" value="F:metal ion binding"/>
    <property type="evidence" value="ECO:0007669"/>
    <property type="project" value="UniProtKB-KW"/>
</dbReference>
<dbReference type="CDD" id="cd01335">
    <property type="entry name" value="Radical_SAM"/>
    <property type="match status" value="1"/>
</dbReference>
<dbReference type="Gene3D" id="3.80.30.30">
    <property type="match status" value="1"/>
</dbReference>
<dbReference type="InterPro" id="IPR006638">
    <property type="entry name" value="Elp3/MiaA/NifB-like_rSAM"/>
</dbReference>
<dbReference type="InterPro" id="IPR040086">
    <property type="entry name" value="MJ0683-like"/>
</dbReference>
<dbReference type="InterPro" id="IPR007197">
    <property type="entry name" value="rSAM"/>
</dbReference>
<dbReference type="PANTHER" id="PTHR43432:SF4">
    <property type="entry name" value="RADICAL SAM CORE DOMAIN-CONTAINING PROTEIN"/>
    <property type="match status" value="1"/>
</dbReference>
<dbReference type="PANTHER" id="PTHR43432">
    <property type="entry name" value="SLR0285 PROTEIN"/>
    <property type="match status" value="1"/>
</dbReference>
<dbReference type="Pfam" id="PF04055">
    <property type="entry name" value="Radical_SAM"/>
    <property type="match status" value="1"/>
</dbReference>
<dbReference type="SFLD" id="SFLDS00029">
    <property type="entry name" value="Radical_SAM"/>
    <property type="match status" value="1"/>
</dbReference>
<dbReference type="SFLD" id="SFLDG01084">
    <property type="entry name" value="Uncharacterised_Radical_SAM_Su"/>
    <property type="match status" value="1"/>
</dbReference>
<dbReference type="SMART" id="SM00729">
    <property type="entry name" value="Elp3"/>
    <property type="match status" value="1"/>
</dbReference>
<dbReference type="SUPFAM" id="SSF102114">
    <property type="entry name" value="Radical SAM enzymes"/>
    <property type="match status" value="1"/>
</dbReference>
<dbReference type="PROSITE" id="PS51918">
    <property type="entry name" value="RADICAL_SAM"/>
    <property type="match status" value="1"/>
</dbReference>